<name>SP17_MACFA</name>
<evidence type="ECO:0000250" key="1"/>
<evidence type="ECO:0000255" key="2">
    <source>
        <dbReference type="PROSITE-ProRule" id="PRU00116"/>
    </source>
</evidence>
<evidence type="ECO:0000256" key="3">
    <source>
        <dbReference type="SAM" id="MobiDB-lite"/>
    </source>
</evidence>
<evidence type="ECO:0000305" key="4"/>
<reference key="1">
    <citation type="journal article" date="1998" name="Biol. Reprod.">
        <title>Immune response to immunization with sperm antigens in the macaque oviduct.</title>
        <authorList>
            <person name="Lea I.A."/>
            <person name="Kurth B."/>
            <person name="O'Rand M.G."/>
        </authorList>
    </citation>
    <scope>NUCLEOTIDE SEQUENCE [MRNA]</scope>
    <source>
        <tissue>Testis</tissue>
    </source>
</reference>
<sequence length="151" mass="17401">MSIPFSNTHYRIPQGFGNLLEGLTREILREQPDNIPAFAAAYFESLLEKREKTNFDPAEWGSKVEDRFYNNHAFEEQEPPEKSDPKQEESQIPGKEEEASVTILDSSEEDKEKEEVAAVKIQAAFRGHVAREEVKKMKTDSLQNEEKEENK</sequence>
<accession>O19021</accession>
<comment type="function">
    <text evidence="1">Sperm surface zona pellucida binding protein. Helps to bind spermatozoa to the zona pellucida with high affinity. Might function in binding zona pellucida and carbohydrates (By similarity).</text>
</comment>
<comment type="subunit">
    <text evidence="1">Homodimer. May interact with ROPN1 (By similarity).</text>
</comment>
<comment type="subcellular location">
    <subcellularLocation>
        <location evidence="4">Membrane</location>
        <topology evidence="4">Peripheral membrane protein</topology>
    </subcellularLocation>
</comment>
<comment type="tissue specificity">
    <text>Testis- and sperm-specific.</text>
</comment>
<proteinExistence type="evidence at transcript level"/>
<organism>
    <name type="scientific">Macaca fascicularis</name>
    <name type="common">Crab-eating macaque</name>
    <name type="synonym">Cynomolgus monkey</name>
    <dbReference type="NCBI Taxonomy" id="9541"/>
    <lineage>
        <taxon>Eukaryota</taxon>
        <taxon>Metazoa</taxon>
        <taxon>Chordata</taxon>
        <taxon>Craniata</taxon>
        <taxon>Vertebrata</taxon>
        <taxon>Euteleostomi</taxon>
        <taxon>Mammalia</taxon>
        <taxon>Eutheria</taxon>
        <taxon>Euarchontoglires</taxon>
        <taxon>Primates</taxon>
        <taxon>Haplorrhini</taxon>
        <taxon>Catarrhini</taxon>
        <taxon>Cercopithecidae</taxon>
        <taxon>Cercopithecinae</taxon>
        <taxon>Macaca</taxon>
    </lineage>
</organism>
<feature type="chain" id="PRO_0000181342" description="Sperm surface protein Sp17">
    <location>
        <begin position="1"/>
        <end position="151"/>
    </location>
</feature>
<feature type="domain" description="IQ" evidence="2">
    <location>
        <begin position="114"/>
        <end position="143"/>
    </location>
</feature>
<feature type="region of interest" description="Disordered" evidence="3">
    <location>
        <begin position="68"/>
        <end position="115"/>
    </location>
</feature>
<feature type="region of interest" description="Disordered" evidence="3">
    <location>
        <begin position="130"/>
        <end position="151"/>
    </location>
</feature>
<feature type="compositionally biased region" description="Basic and acidic residues" evidence="3">
    <location>
        <begin position="68"/>
        <end position="98"/>
    </location>
</feature>
<keyword id="KW-0472">Membrane</keyword>
<keyword id="KW-1185">Reference proteome</keyword>
<gene>
    <name type="primary">SPA17</name>
    <name type="synonym">SP17</name>
</gene>
<protein>
    <recommendedName>
        <fullName>Sperm surface protein Sp17</fullName>
    </recommendedName>
    <alternativeName>
        <fullName>Sperm autoantigenic protein 17</fullName>
    </alternativeName>
</protein>
<dbReference type="EMBL" id="AF005551">
    <property type="protein sequence ID" value="AAB62888.1"/>
    <property type="molecule type" value="mRNA"/>
</dbReference>
<dbReference type="RefSeq" id="XP_045226765.1">
    <property type="nucleotide sequence ID" value="XM_045370830.2"/>
</dbReference>
<dbReference type="RefSeq" id="XP_065385233.1">
    <property type="nucleotide sequence ID" value="XM_065529161.1"/>
</dbReference>
<dbReference type="SMR" id="O19021"/>
<dbReference type="STRING" id="9541.ENSMFAP00000016317"/>
<dbReference type="GeneID" id="101865183"/>
<dbReference type="eggNOG" id="ENOG502S4R6">
    <property type="taxonomic scope" value="Eukaryota"/>
</dbReference>
<dbReference type="Proteomes" id="UP000233100">
    <property type="component" value="Unplaced"/>
</dbReference>
<dbReference type="GO" id="GO:0016020">
    <property type="term" value="C:membrane"/>
    <property type="evidence" value="ECO:0007669"/>
    <property type="project" value="UniProtKB-SubCell"/>
</dbReference>
<dbReference type="GO" id="GO:0005516">
    <property type="term" value="F:calmodulin binding"/>
    <property type="evidence" value="ECO:0007669"/>
    <property type="project" value="TreeGrafter"/>
</dbReference>
<dbReference type="GO" id="GO:0007339">
    <property type="term" value="P:binding of sperm to zona pellucida"/>
    <property type="evidence" value="ECO:0007669"/>
    <property type="project" value="InterPro"/>
</dbReference>
<dbReference type="CDD" id="cd12100">
    <property type="entry name" value="DD_CABYR_SP17"/>
    <property type="match status" value="1"/>
</dbReference>
<dbReference type="CDD" id="cd23767">
    <property type="entry name" value="IQCD"/>
    <property type="match status" value="1"/>
</dbReference>
<dbReference type="FunFam" id="1.20.5.190:FF:000045">
    <property type="entry name" value="Sperm surface protein Sp17"/>
    <property type="match status" value="1"/>
</dbReference>
<dbReference type="FunFam" id="1.20.890.10:FF:000006">
    <property type="entry name" value="Sperm surface protein Sp17"/>
    <property type="match status" value="1"/>
</dbReference>
<dbReference type="Gene3D" id="1.20.5.190">
    <property type="match status" value="1"/>
</dbReference>
<dbReference type="Gene3D" id="1.20.890.10">
    <property type="entry name" value="cAMP-dependent protein kinase regulatory subunit, dimerization-anchoring domain"/>
    <property type="match status" value="1"/>
</dbReference>
<dbReference type="InterPro" id="IPR003117">
    <property type="entry name" value="cAMP_dep_PK_reg_su_I/II_a/b"/>
</dbReference>
<dbReference type="InterPro" id="IPR047579">
    <property type="entry name" value="DD_CABYR_SP17"/>
</dbReference>
<dbReference type="InterPro" id="IPR000048">
    <property type="entry name" value="IQ_motif_EF-hand-BS"/>
</dbReference>
<dbReference type="InterPro" id="IPR012105">
    <property type="entry name" value="Sp17"/>
</dbReference>
<dbReference type="PANTHER" id="PTHR10699:SF11">
    <property type="entry name" value="IGLOO, ISOFORM A"/>
    <property type="match status" value="1"/>
</dbReference>
<dbReference type="PANTHER" id="PTHR10699">
    <property type="entry name" value="NEUROMODULIN"/>
    <property type="match status" value="1"/>
</dbReference>
<dbReference type="Pfam" id="PF00612">
    <property type="entry name" value="IQ"/>
    <property type="match status" value="1"/>
</dbReference>
<dbReference type="Pfam" id="PF02197">
    <property type="entry name" value="RIIa"/>
    <property type="match status" value="1"/>
</dbReference>
<dbReference type="PIRSF" id="PIRSF016533">
    <property type="entry name" value="Sp17"/>
    <property type="match status" value="1"/>
</dbReference>
<dbReference type="SMART" id="SM00015">
    <property type="entry name" value="IQ"/>
    <property type="match status" value="1"/>
</dbReference>
<dbReference type="SMART" id="SM00394">
    <property type="entry name" value="RIIa"/>
    <property type="match status" value="1"/>
</dbReference>
<dbReference type="SUPFAM" id="SSF47391">
    <property type="entry name" value="Dimerization-anchoring domain of cAMP-dependent PK regulatory subunit"/>
    <property type="match status" value="1"/>
</dbReference>
<dbReference type="PROSITE" id="PS50096">
    <property type="entry name" value="IQ"/>
    <property type="match status" value="1"/>
</dbReference>